<dbReference type="EMBL" id="AP009384">
    <property type="protein sequence ID" value="BAF87308.1"/>
    <property type="molecule type" value="Genomic_DNA"/>
</dbReference>
<dbReference type="RefSeq" id="WP_012169838.1">
    <property type="nucleotide sequence ID" value="NC_009937.1"/>
</dbReference>
<dbReference type="STRING" id="438753.AZC_1310"/>
<dbReference type="KEGG" id="azc:AZC_1310"/>
<dbReference type="eggNOG" id="COG3002">
    <property type="taxonomic scope" value="Bacteria"/>
</dbReference>
<dbReference type="HOGENOM" id="CLU_009885_1_0_5"/>
<dbReference type="Proteomes" id="UP000000270">
    <property type="component" value="Chromosome"/>
</dbReference>
<dbReference type="GO" id="GO:0005886">
    <property type="term" value="C:plasma membrane"/>
    <property type="evidence" value="ECO:0007669"/>
    <property type="project" value="UniProtKB-SubCell"/>
</dbReference>
<dbReference type="GO" id="GO:0008270">
    <property type="term" value="F:zinc ion binding"/>
    <property type="evidence" value="ECO:0007669"/>
    <property type="project" value="UniProtKB-UniRule"/>
</dbReference>
<dbReference type="HAMAP" id="MF_01871">
    <property type="entry name" value="DabA"/>
    <property type="match status" value="1"/>
</dbReference>
<dbReference type="InterPro" id="IPR018752">
    <property type="entry name" value="DabA"/>
</dbReference>
<dbReference type="PANTHER" id="PTHR38344:SF1">
    <property type="entry name" value="INORGANIC CARBON TRANSPORTER SUBUNIT DABA-RELATED"/>
    <property type="match status" value="1"/>
</dbReference>
<dbReference type="PANTHER" id="PTHR38344">
    <property type="entry name" value="UPF0753 PROTEIN AQ_863"/>
    <property type="match status" value="1"/>
</dbReference>
<dbReference type="Pfam" id="PF10070">
    <property type="entry name" value="DabA"/>
    <property type="match status" value="1"/>
</dbReference>
<keyword id="KW-0997">Cell inner membrane</keyword>
<keyword id="KW-1003">Cell membrane</keyword>
<keyword id="KW-0472">Membrane</keyword>
<keyword id="KW-0479">Metal-binding</keyword>
<keyword id="KW-1185">Reference proteome</keyword>
<keyword id="KW-0813">Transport</keyword>
<keyword id="KW-0862">Zinc</keyword>
<evidence type="ECO:0000255" key="1">
    <source>
        <dbReference type="HAMAP-Rule" id="MF_01871"/>
    </source>
</evidence>
<accession>A8I0Y1</accession>
<organism>
    <name type="scientific">Azorhizobium caulinodans (strain ATCC 43989 / DSM 5975 / JCM 20966 / LMG 6465 / NBRC 14845 / NCIMB 13405 / ORS 571)</name>
    <dbReference type="NCBI Taxonomy" id="438753"/>
    <lineage>
        <taxon>Bacteria</taxon>
        <taxon>Pseudomonadati</taxon>
        <taxon>Pseudomonadota</taxon>
        <taxon>Alphaproteobacteria</taxon>
        <taxon>Hyphomicrobiales</taxon>
        <taxon>Xanthobacteraceae</taxon>
        <taxon>Azorhizobium</taxon>
    </lineage>
</organism>
<proteinExistence type="inferred from homology"/>
<gene>
    <name evidence="1" type="primary">dabA</name>
    <name type="ordered locus">AZC_1310</name>
</gene>
<sequence>MLMTTPGSPLPSPDVLLEAANRAARAIPPLWPLASSVAVNPFLGQTGEPLATAASRLRRVAGIPLTMPRSWYADRLRSGEIAEEDLRAAFESAPAALRPKTFASLKRAVQSERPEPHAIPTLADLARDVAGIDWPAIVNDRISHWASSYFDEGQALWAKGQQGAAYSAWRIIATHDLTPEIAGLEGFAQSVADAPANAEDAIIACVARLGLCGPALESYFHRLLTTLGGWSQLARYRLWQAELTGNTDASVTDLLTIRLIWEAALLRKFGPVVEAQWKAAIAAYAEPVSATPEDVVDAILQEAAERAAQWRLGACLTGTSPARVADGRPTLQMAFCIDVRSEVFRRALESLDPGIRTLGFAGFFGLGIGHRRFGSDVVEARLPVLLKPGIFTCSGEATPAVTSSDLAARITARVERAWGRFKLAAISSFAFVEAAGPIYVAKLLRDGLGLKRHAAPNDPAPRPTSALDLDTRLTMAVSILKAMSLTRGFARLVLLAGHGANVVNNPHASALHCGACGGYSGEVNARLLASVLNDREVRADLAERGIIVPEDTLFLAALHDTTTDDVNIYAADHASAAHAEDVDQAERWLKSAGILARGERALRLPRAKQGQDIPHRARDWAELRPEWALAGCQAFIAAPRARTAGHDLAGRAFLHDYDWRRDDGFGVLELILTAPVVVASWISLQYYGSTVAPDVFGAGNKLLHNVTGGIGVVEGNGGLLRAGLPWQSVHDGERLTHEPLRLSVLIEAPREAIARILERHPEVRALFDNLWLHLFALDDKGRMAWRYTGDLQWETCVGDEHADEHSVREVA</sequence>
<name>DABA_AZOC5</name>
<feature type="chain" id="PRO_0000387232" description="Probable inorganic carbon transporter subunit DabA">
    <location>
        <begin position="1"/>
        <end position="811"/>
    </location>
</feature>
<feature type="binding site" evidence="1">
    <location>
        <position position="336"/>
    </location>
    <ligand>
        <name>Zn(2+)</name>
        <dbReference type="ChEBI" id="CHEBI:29105"/>
    </ligand>
</feature>
<feature type="binding site" evidence="1">
    <location>
        <position position="338"/>
    </location>
    <ligand>
        <name>Zn(2+)</name>
        <dbReference type="ChEBI" id="CHEBI:29105"/>
    </ligand>
</feature>
<feature type="binding site" evidence="1">
    <location>
        <position position="498"/>
    </location>
    <ligand>
        <name>Zn(2+)</name>
        <dbReference type="ChEBI" id="CHEBI:29105"/>
    </ligand>
</feature>
<feature type="binding site" evidence="1">
    <location>
        <position position="513"/>
    </location>
    <ligand>
        <name>Zn(2+)</name>
        <dbReference type="ChEBI" id="CHEBI:29105"/>
    </ligand>
</feature>
<reference key="1">
    <citation type="submission" date="2007-04" db="EMBL/GenBank/DDBJ databases">
        <title>Complete genome sequence of the nitrogen-fixing bacterium Azorhizobium caulinodans ORS571.</title>
        <authorList>
            <person name="Lee K.B."/>
            <person name="Backer P.D."/>
            <person name="Aono T."/>
            <person name="Liu C.T."/>
            <person name="Suzuki S."/>
            <person name="Suzuki T."/>
            <person name="Kaneko T."/>
            <person name="Yamada M."/>
            <person name="Tabata S."/>
            <person name="Kupfer D.M."/>
            <person name="Najar F.Z."/>
            <person name="Wiley G.B."/>
            <person name="Roe B."/>
            <person name="Binnewies T."/>
            <person name="Ussery D."/>
            <person name="Vereecke D."/>
            <person name="Gevers D."/>
            <person name="Holsters M."/>
            <person name="Oyaizu H."/>
        </authorList>
    </citation>
    <scope>NUCLEOTIDE SEQUENCE [LARGE SCALE GENOMIC DNA]</scope>
    <source>
        <strain>ATCC 43989 / DSM 5975 / JCM 20966 / LMG 6465 / NBRC 14845 / NCIMB 13405 / ORS 571</strain>
    </source>
</reference>
<comment type="function">
    <text evidence="1">Part of an energy-coupled inorganic carbon pump.</text>
</comment>
<comment type="cofactor">
    <cofactor evidence="1">
        <name>Zn(2+)</name>
        <dbReference type="ChEBI" id="CHEBI:29105"/>
    </cofactor>
</comment>
<comment type="subunit">
    <text evidence="1">Forms a complex with DabB.</text>
</comment>
<comment type="subcellular location">
    <subcellularLocation>
        <location evidence="1">Cell inner membrane</location>
        <topology evidence="1">Peripheral membrane protein</topology>
    </subcellularLocation>
</comment>
<comment type="similarity">
    <text evidence="1">Belongs to the inorganic carbon transporter (TC 9.A.2) DabA family.</text>
</comment>
<protein>
    <recommendedName>
        <fullName evidence="1">Probable inorganic carbon transporter subunit DabA</fullName>
    </recommendedName>
</protein>